<evidence type="ECO:0000250" key="1">
    <source>
        <dbReference type="UniProtKB" id="P02722"/>
    </source>
</evidence>
<evidence type="ECO:0000250" key="2">
    <source>
        <dbReference type="UniProtKB" id="P18238"/>
    </source>
</evidence>
<evidence type="ECO:0000250" key="3">
    <source>
        <dbReference type="UniProtKB" id="P18239"/>
    </source>
</evidence>
<evidence type="ECO:0000255" key="4">
    <source>
        <dbReference type="PROSITE-ProRule" id="PRU00282"/>
    </source>
</evidence>
<evidence type="ECO:0000269" key="5">
    <source>
    </source>
</evidence>
<evidence type="ECO:0000303" key="6">
    <source>
    </source>
</evidence>
<evidence type="ECO:0000305" key="7"/>
<evidence type="ECO:0000312" key="8">
    <source>
        <dbReference type="EMBL" id="AEO62043.1"/>
    </source>
</evidence>
<evidence type="ECO:0007744" key="9">
    <source>
        <dbReference type="PDB" id="6GCI"/>
    </source>
</evidence>
<evidence type="ECO:0007829" key="10">
    <source>
        <dbReference type="PDB" id="6GCI"/>
    </source>
</evidence>
<dbReference type="EMBL" id="CP003008">
    <property type="protein sequence ID" value="AEO62043.1"/>
    <property type="molecule type" value="Genomic_DNA"/>
</dbReference>
<dbReference type="RefSeq" id="XP_003667288.1">
    <property type="nucleotide sequence ID" value="XM_003667240.1"/>
</dbReference>
<dbReference type="PDB" id="6GCI">
    <property type="method" value="X-ray"/>
    <property type="resolution" value="3.30 A"/>
    <property type="chains" value="A=1-315"/>
</dbReference>
<dbReference type="PDBsum" id="6GCI"/>
<dbReference type="SMR" id="G2QNH0"/>
<dbReference type="FunCoup" id="G2QNH0">
    <property type="interactions" value="892"/>
</dbReference>
<dbReference type="STRING" id="573729.G2QNH0"/>
<dbReference type="ABCD" id="G2QNH0">
    <property type="antibodies" value="1 sequenced antibody"/>
</dbReference>
<dbReference type="GeneID" id="11509839"/>
<dbReference type="KEGG" id="mtm:MYCTH_2316753"/>
<dbReference type="VEuPathDB" id="FungiDB:MYCTH_2316753"/>
<dbReference type="eggNOG" id="KOG0749">
    <property type="taxonomic scope" value="Eukaryota"/>
</dbReference>
<dbReference type="HOGENOM" id="CLU_015166_12_0_1"/>
<dbReference type="InParanoid" id="G2QNH0"/>
<dbReference type="OMA" id="CWATIYK"/>
<dbReference type="OrthoDB" id="270584at2759"/>
<dbReference type="Proteomes" id="UP000007322">
    <property type="component" value="Chromosome 7"/>
</dbReference>
<dbReference type="GO" id="GO:0005743">
    <property type="term" value="C:mitochondrial inner membrane"/>
    <property type="evidence" value="ECO:0007669"/>
    <property type="project" value="UniProtKB-SubCell"/>
</dbReference>
<dbReference type="GO" id="GO:0005471">
    <property type="term" value="F:ATP:ADP antiporter activity"/>
    <property type="evidence" value="ECO:0000314"/>
    <property type="project" value="UniProtKB"/>
</dbReference>
<dbReference type="GO" id="GO:0140021">
    <property type="term" value="P:mitochondrial ADP transmembrane transport"/>
    <property type="evidence" value="ECO:0000314"/>
    <property type="project" value="UniProtKB"/>
</dbReference>
<dbReference type="GO" id="GO:1990544">
    <property type="term" value="P:mitochondrial ATP transmembrane transport"/>
    <property type="evidence" value="ECO:0000314"/>
    <property type="project" value="UniProtKB"/>
</dbReference>
<dbReference type="FunFam" id="1.50.40.10:FF:000001">
    <property type="entry name" value="ADP,ATP carrier protein, mitochondrial"/>
    <property type="match status" value="1"/>
</dbReference>
<dbReference type="Gene3D" id="1.50.40.10">
    <property type="entry name" value="Mitochondrial carrier domain"/>
    <property type="match status" value="1"/>
</dbReference>
<dbReference type="InterPro" id="IPR002113">
    <property type="entry name" value="ADT_euk_type"/>
</dbReference>
<dbReference type="InterPro" id="IPR002067">
    <property type="entry name" value="Mit_carrier"/>
</dbReference>
<dbReference type="InterPro" id="IPR018108">
    <property type="entry name" value="Mitochondrial_sb/sol_carrier"/>
</dbReference>
<dbReference type="InterPro" id="IPR023395">
    <property type="entry name" value="Mt_carrier_dom_sf"/>
</dbReference>
<dbReference type="PANTHER" id="PTHR45635">
    <property type="entry name" value="ADP,ATP CARRIER PROTEIN 1-RELATED-RELATED"/>
    <property type="match status" value="1"/>
</dbReference>
<dbReference type="PANTHER" id="PTHR45635:SF14">
    <property type="entry name" value="ADP_ATP TRANSLOCASE"/>
    <property type="match status" value="1"/>
</dbReference>
<dbReference type="Pfam" id="PF00153">
    <property type="entry name" value="Mito_carr"/>
    <property type="match status" value="3"/>
</dbReference>
<dbReference type="PRINTS" id="PR00927">
    <property type="entry name" value="ADPTRNSLCASE"/>
</dbReference>
<dbReference type="PRINTS" id="PR00926">
    <property type="entry name" value="MITOCARRIER"/>
</dbReference>
<dbReference type="SUPFAM" id="SSF103506">
    <property type="entry name" value="Mitochondrial carrier"/>
    <property type="match status" value="1"/>
</dbReference>
<dbReference type="PROSITE" id="PS50920">
    <property type="entry name" value="SOLCAR"/>
    <property type="match status" value="3"/>
</dbReference>
<accession>G2QNH0</accession>
<name>ADT_THET4</name>
<organism>
    <name type="scientific">Thermothelomyces thermophilus (strain ATCC 42464 / BCRC 31852 / DSM 1799)</name>
    <name type="common">Sporotrichum thermophile</name>
    <dbReference type="NCBI Taxonomy" id="573729"/>
    <lineage>
        <taxon>Eukaryota</taxon>
        <taxon>Fungi</taxon>
        <taxon>Dikarya</taxon>
        <taxon>Ascomycota</taxon>
        <taxon>Pezizomycotina</taxon>
        <taxon>Sordariomycetes</taxon>
        <taxon>Sordariomycetidae</taxon>
        <taxon>Sordariales</taxon>
        <taxon>Chaetomiaceae</taxon>
        <taxon>Thermothelomyces</taxon>
    </lineage>
</organism>
<keyword id="KW-0002">3D-structure</keyword>
<keyword id="KW-0050">Antiport</keyword>
<keyword id="KW-0472">Membrane</keyword>
<keyword id="KW-0496">Mitochondrion</keyword>
<keyword id="KW-0999">Mitochondrion inner membrane</keyword>
<keyword id="KW-1185">Reference proteome</keyword>
<keyword id="KW-0677">Repeat</keyword>
<keyword id="KW-0812">Transmembrane</keyword>
<keyword id="KW-1133">Transmembrane helix</keyword>
<keyword id="KW-0813">Transport</keyword>
<gene>
    <name evidence="8" type="ORF">MYCTH_2316753</name>
</gene>
<proteinExistence type="evidence at protein level"/>
<reference key="1">
    <citation type="journal article" date="2011" name="Nat. Biotechnol.">
        <title>Comparative genomic analysis of the thermophilic biomass-degrading fungi Myceliophthora thermophila and Thielavia terrestris.</title>
        <authorList>
            <person name="Berka R.M."/>
            <person name="Grigoriev I.V."/>
            <person name="Otillar R."/>
            <person name="Salamov A."/>
            <person name="Grimwood J."/>
            <person name="Reid I."/>
            <person name="Ishmael N."/>
            <person name="John T."/>
            <person name="Darmond C."/>
            <person name="Moisan M.-C."/>
            <person name="Henrissat B."/>
            <person name="Coutinho P.M."/>
            <person name="Lombard V."/>
            <person name="Natvig D.O."/>
            <person name="Lindquist E."/>
            <person name="Schmutz J."/>
            <person name="Lucas S."/>
            <person name="Harris P."/>
            <person name="Powlowski J."/>
            <person name="Bellemare A."/>
            <person name="Taylor D."/>
            <person name="Butler G."/>
            <person name="de Vries R.P."/>
            <person name="Allijn I.E."/>
            <person name="van den Brink J."/>
            <person name="Ushinsky S."/>
            <person name="Storms R."/>
            <person name="Powell A.J."/>
            <person name="Paulsen I.T."/>
            <person name="Elbourne L.D.H."/>
            <person name="Baker S.E."/>
            <person name="Magnuson J."/>
            <person name="LaBoissiere S."/>
            <person name="Clutterbuck A.J."/>
            <person name="Martinez D."/>
            <person name="Wogulis M."/>
            <person name="de Leon A.L."/>
            <person name="Rey M.W."/>
            <person name="Tsang A."/>
        </authorList>
    </citation>
    <scope>NUCLEOTIDE SEQUENCE [LARGE SCALE GENOMIC DNA]</scope>
    <source>
        <strain>ATCC 42464 / BCRC 31852 / DSM 1799</strain>
    </source>
</reference>
<reference evidence="9" key="2">
    <citation type="journal article" date="2019" name="Cell">
        <title>The molecular mechanism of transport by the mitochondrial ADP/ATP carrier.</title>
        <authorList>
            <person name="Ruprecht J.J."/>
            <person name="King M.S."/>
            <person name="Zoegg T."/>
            <person name="Aleksandrova A.A."/>
            <person name="Pardon E."/>
            <person name="Crichton P.G."/>
            <person name="Steyaert J."/>
            <person name="Kunji E.R.S."/>
        </authorList>
    </citation>
    <scope>X-RAY CRYSTALLOGRAPHY (3.30 ANGSTROMS) OF MUTANT LYS-302 IN COMPLEX WITH BONGKREKIC ACID AND CARDIOLIPIN</scope>
    <scope>FUNCTION</scope>
    <scope>CATALYTIC ACTIVITY</scope>
    <scope>ACTIVITY REGULATION</scope>
    <scope>SUBUNIT</scope>
    <scope>DOMAIN</scope>
    <scope>MUTAGENESIS OF LYS-30; ARG-88; ASN-96; ARG-100; GLY-192; ILE-193; TYR-196; ARG-197; SER-238; ARG-246; ARG-287 AND GLN-302</scope>
</reference>
<comment type="function">
    <text evidence="5">ADP:ATP antiporter that mediates import of ADP into the mitochondrial matrix for ATP synthesis, and export of ATP out to fuel the cell (PubMed:30611538). Cycles between the cytoplasmic-open state (c-state) and the matrix-open state (m-state): operates by the alternating access mechanism with a single substrate-binding site intermittently exposed to either the cytosolic (c-state) or matrix (m-state) side of the inner mitochondrial membrane (PubMed:30611538).</text>
</comment>
<comment type="catalytic activity">
    <reaction evidence="5">
        <text>ADP(in) + ATP(out) = ADP(out) + ATP(in)</text>
        <dbReference type="Rhea" id="RHEA:34999"/>
        <dbReference type="ChEBI" id="CHEBI:30616"/>
        <dbReference type="ChEBI" id="CHEBI:456216"/>
    </reaction>
    <physiologicalReaction direction="left-to-right" evidence="5">
        <dbReference type="Rhea" id="RHEA:35000"/>
    </physiologicalReaction>
</comment>
<comment type="activity regulation">
    <text evidence="5">The matrix-open state (m-state) is inhibited by the membrane-permeable bongkrekic acid (BKA) (PubMed:30611538). The cytoplasmic-open state (c-state) is inhibited by the membrane-impermeable toxic inhibitor carboxyatractyloside (CATR) (PubMed:30611538).</text>
</comment>
<comment type="subunit">
    <text evidence="5">Monomer.</text>
</comment>
<comment type="subcellular location">
    <subcellularLocation>
        <location evidence="3">Mitochondrion inner membrane</location>
        <topology evidence="5">Multi-pass membrane protein</topology>
    </subcellularLocation>
</comment>
<comment type="domain">
    <text evidence="5">The transmembrane helices are not perpendicular to the plane of the membrane, but cross the membrane at an angle. Odd-numbered transmembrane helices exhibit a sharp kink, due to the presence of a conserved proline residue.</text>
</comment>
<comment type="similarity">
    <text evidence="7">Belongs to the mitochondrial carrier (TC 2.A.29) family.</text>
</comment>
<sequence>MSNKQETKILGMPPFVVDFLMGGVSAAVSKTAAAPIERIKLLVQNQDEMIKAGRLDRRYNGIIDCFRRTTADEGLMALWRGNTANVIRYFPTQALNFAFRDKFKAMFGYKKDKDGYAKWMAGNLASGGAAGATSLLFVYSLDYARTRLANDAKSAKGGGARQFNGLIDVYRKTLASDGIAGLYRGFGPSVAGIVVYRGLYFGMYDSIKPVVLVGPLANNFLASFLLGWCVTTGAGIASYPLDTVRRRMMMTSGEAVKYKSSIDAFRQIIAKEGVKSLFKGAGANILRGVAGAGVLSIYDQLQILLFGKAFKGGSG</sequence>
<feature type="chain" id="PRO_0000452326" description="ADP/ATP translocase">
    <location>
        <begin position="1"/>
        <end position="315"/>
    </location>
</feature>
<feature type="topological domain" description="Mitochondrial intermembrane" evidence="7">
    <location>
        <begin position="1"/>
        <end position="13"/>
    </location>
</feature>
<feature type="transmembrane region" description="Helical; Name=1" evidence="5 9">
    <location>
        <begin position="14"/>
        <end position="37"/>
    </location>
</feature>
<feature type="topological domain" description="Mitochondrial matrix" evidence="7">
    <location>
        <begin position="38"/>
        <end position="80"/>
    </location>
</feature>
<feature type="transmembrane region" description="Helical; Name=2" evidence="5 9">
    <location>
        <begin position="81"/>
        <end position="104"/>
    </location>
</feature>
<feature type="topological domain" description="Mitochondrial intermembrane" evidence="7">
    <location>
        <begin position="105"/>
        <end position="115"/>
    </location>
</feature>
<feature type="transmembrane region" description="Helical; Name=3" evidence="5 9">
    <location>
        <begin position="116"/>
        <end position="145"/>
    </location>
</feature>
<feature type="topological domain" description="Mitochondrial matrix" evidence="7">
    <location>
        <begin position="146"/>
        <end position="184"/>
    </location>
</feature>
<feature type="transmembrane region" description="Helical; Name=4" evidence="5 9">
    <location>
        <begin position="185"/>
        <end position="213"/>
    </location>
</feature>
<feature type="topological domain" description="Mitochondrial intermembrane" evidence="7">
    <location>
        <begin position="214"/>
        <end position="216"/>
    </location>
</feature>
<feature type="transmembrane region" description="Helical; Name=5" evidence="5 9">
    <location>
        <begin position="217"/>
        <end position="242"/>
    </location>
</feature>
<feature type="topological domain" description="Mitochondrial matrix" evidence="7">
    <location>
        <begin position="243"/>
        <end position="283"/>
    </location>
</feature>
<feature type="transmembrane region" description="Helical; Name=6" evidence="5 9">
    <location>
        <begin position="284"/>
        <end position="304"/>
    </location>
</feature>
<feature type="topological domain" description="Mitochondrial intermembrane" evidence="7">
    <location>
        <begin position="305"/>
        <end position="315"/>
    </location>
</feature>
<feature type="repeat" description="Solcar" evidence="4">
    <location>
        <begin position="13"/>
        <end position="106"/>
    </location>
</feature>
<feature type="repeat" description="Solcar" evidence="4">
    <location>
        <begin position="118"/>
        <end position="210"/>
    </location>
</feature>
<feature type="repeat" description="Solcar" evidence="4">
    <location>
        <begin position="218"/>
        <end position="304"/>
    </location>
</feature>
<feature type="short sequence motif" description="Nucleotide carrier signature motif" evidence="1">
    <location>
        <begin position="245"/>
        <end position="250"/>
    </location>
</feature>
<feature type="binding site" evidence="5 9">
    <location>
        <position position="30"/>
    </location>
    <ligand>
        <name>bongkrekate</name>
        <dbReference type="ChEBI" id="CHEBI:178020"/>
        <note>inhibitor</note>
    </ligand>
</feature>
<feature type="binding site" evidence="5 9">
    <location>
        <position position="62"/>
    </location>
    <ligand>
        <name>a cardiolipin</name>
        <dbReference type="ChEBI" id="CHEBI:62237"/>
    </ligand>
</feature>
<feature type="binding site" evidence="5 9">
    <location>
        <begin position="81"/>
        <end position="83"/>
    </location>
    <ligand>
        <name>a cardiolipin</name>
        <dbReference type="ChEBI" id="CHEBI:62237"/>
    </ligand>
</feature>
<feature type="binding site" evidence="5 9">
    <location>
        <begin position="88"/>
        <end position="89"/>
    </location>
    <ligand>
        <name>bongkrekate</name>
        <dbReference type="ChEBI" id="CHEBI:178020"/>
        <note>inhibitor</note>
    </ligand>
</feature>
<feature type="binding site" evidence="2">
    <location>
        <position position="88"/>
    </location>
    <ligand>
        <name>ADP</name>
        <dbReference type="ChEBI" id="CHEBI:456216"/>
    </ligand>
</feature>
<feature type="binding site" evidence="5 9">
    <location>
        <position position="96"/>
    </location>
    <ligand>
        <name>bongkrekate</name>
        <dbReference type="ChEBI" id="CHEBI:178020"/>
        <note>inhibitor</note>
    </ligand>
</feature>
<feature type="binding site" evidence="5 9">
    <location>
        <position position="166"/>
    </location>
    <ligand>
        <name>a cardiolipin</name>
        <dbReference type="ChEBI" id="CHEBI:62237"/>
    </ligand>
</feature>
<feature type="binding site" evidence="5 9">
    <location>
        <begin position="184"/>
        <end position="185"/>
    </location>
    <ligand>
        <name>a cardiolipin</name>
        <dbReference type="ChEBI" id="CHEBI:62237"/>
    </ligand>
</feature>
<feature type="binding site" evidence="5 9">
    <location>
        <begin position="196"/>
        <end position="197"/>
    </location>
    <ligand>
        <name>bongkrekate</name>
        <dbReference type="ChEBI" id="CHEBI:178020"/>
        <note>inhibitor</note>
    </ligand>
</feature>
<feature type="binding site" evidence="2">
    <location>
        <position position="245"/>
    </location>
    <ligand>
        <name>ADP</name>
        <dbReference type="ChEBI" id="CHEBI:456216"/>
    </ligand>
</feature>
<feature type="binding site" evidence="5 9">
    <location>
        <begin position="260"/>
        <end position="261"/>
    </location>
    <ligand>
        <name>a cardiolipin</name>
        <dbReference type="ChEBI" id="CHEBI:62237"/>
    </ligand>
</feature>
<feature type="binding site" evidence="5 9">
    <location>
        <begin position="280"/>
        <end position="282"/>
    </location>
    <ligand>
        <name>a cardiolipin</name>
        <dbReference type="ChEBI" id="CHEBI:62237"/>
    </ligand>
</feature>
<feature type="mutagenesis site" description="Abolished ADP:ATP antiporter activity. Decreased bongkrekic acid-binding." evidence="5">
    <original>K</original>
    <variation>A</variation>
    <location>
        <position position="30"/>
    </location>
</feature>
<feature type="mutagenesis site" description="Abolished ADP:ATP antiporter activity. Decreased bongkrekic acid-binding." evidence="5">
    <original>R</original>
    <variation>A</variation>
    <location>
        <position position="88"/>
    </location>
</feature>
<feature type="mutagenesis site" description="Decreased bongkrekic acid-binding." evidence="5">
    <original>N</original>
    <variation>A</variation>
    <location>
        <position position="96"/>
    </location>
</feature>
<feature type="mutagenesis site" description="Strongly decreased ADP:ATP antiporter activity." evidence="5">
    <original>R</original>
    <variation>A</variation>
    <location>
        <position position="100"/>
    </location>
</feature>
<feature type="mutagenesis site" description="Abolished ADP:ATP antiporter activity." evidence="5">
    <original>G</original>
    <variation>A</variation>
    <location>
        <position position="192"/>
    </location>
</feature>
<feature type="mutagenesis site" description="Strongly decreased ADP:ATP antiporter activity. Decreased bongkrekic acid-binding." evidence="5">
    <original>I</original>
    <variation>A</variation>
    <location>
        <position position="193"/>
    </location>
</feature>
<feature type="mutagenesis site" description="Abolished ADP:ATP antiporter activity. Decreased bongkrekic acid-binding." evidence="5">
    <original>Y</original>
    <variation>A</variation>
    <location>
        <position position="196"/>
    </location>
</feature>
<feature type="mutagenesis site" description="Abolished ADP:ATP antiporter activity. Decreased bongkrekic acid-binding." evidence="5">
    <original>R</original>
    <variation>A</variation>
    <location>
        <position position="197"/>
    </location>
</feature>
<feature type="mutagenesis site" description="Decreased ADP:ATP antiporter activity. Does not affect bongkrekic acid-binding." evidence="5">
    <original>S</original>
    <variation>A</variation>
    <location>
        <position position="238"/>
    </location>
</feature>
<feature type="mutagenesis site" description="Abolished ADP:ATP antiporter activity." evidence="5">
    <original>R</original>
    <variation>A</variation>
    <location>
        <position position="246"/>
    </location>
</feature>
<feature type="mutagenesis site" description="Strongly decreased ADP:ATP antiporter activity. Does not affect bongkrekic acid-binding." evidence="5">
    <original>R</original>
    <variation>A</variation>
    <location>
        <position position="287"/>
    </location>
</feature>
<feature type="mutagenesis site" description="Increased thermal stability." evidence="5">
    <original>Q</original>
    <variation>K</variation>
    <location>
        <position position="302"/>
    </location>
</feature>
<feature type="helix" evidence="10">
    <location>
        <begin position="14"/>
        <end position="44"/>
    </location>
</feature>
<feature type="helix" evidence="10">
    <location>
        <begin position="47"/>
        <end position="51"/>
    </location>
</feature>
<feature type="helix" evidence="10">
    <location>
        <begin position="62"/>
        <end position="73"/>
    </location>
</feature>
<feature type="helix" evidence="10">
    <location>
        <begin position="75"/>
        <end position="79"/>
    </location>
</feature>
<feature type="helix" evidence="10">
    <location>
        <begin position="82"/>
        <end position="107"/>
    </location>
</feature>
<feature type="helix" evidence="10">
    <location>
        <begin position="111"/>
        <end position="114"/>
    </location>
</feature>
<feature type="helix" evidence="10">
    <location>
        <begin position="116"/>
        <end position="156"/>
    </location>
</feature>
<feature type="helix" evidence="10">
    <location>
        <begin position="166"/>
        <end position="177"/>
    </location>
</feature>
<feature type="helix" evidence="10">
    <location>
        <begin position="179"/>
        <end position="182"/>
    </location>
</feature>
<feature type="turn" evidence="10">
    <location>
        <begin position="183"/>
        <end position="185"/>
    </location>
</feature>
<feature type="helix" evidence="10">
    <location>
        <begin position="186"/>
        <end position="211"/>
    </location>
</feature>
<feature type="helix" evidence="10">
    <location>
        <begin position="214"/>
        <end position="216"/>
    </location>
</feature>
<feature type="helix" evidence="10">
    <location>
        <begin position="221"/>
        <end position="249"/>
    </location>
</feature>
<feature type="helix" evidence="10">
    <location>
        <begin position="261"/>
        <end position="271"/>
    </location>
</feature>
<feature type="helix" evidence="10">
    <location>
        <begin position="274"/>
        <end position="278"/>
    </location>
</feature>
<feature type="helix" evidence="10">
    <location>
        <begin position="281"/>
        <end position="284"/>
    </location>
</feature>
<feature type="helix" evidence="10">
    <location>
        <begin position="285"/>
        <end position="305"/>
    </location>
</feature>
<protein>
    <recommendedName>
        <fullName evidence="7">ADP/ATP translocase</fullName>
    </recommendedName>
    <alternativeName>
        <fullName evidence="6">ADP/ATP carrier</fullName>
        <shortName evidence="6">TtAac</shortName>
    </alternativeName>
</protein>